<accession>Q65W16</accession>
<comment type="catalytic activity">
    <reaction evidence="1">
        <text>2-(N(omega)-L-arginino)succinate = fumarate + L-arginine</text>
        <dbReference type="Rhea" id="RHEA:24020"/>
        <dbReference type="ChEBI" id="CHEBI:29806"/>
        <dbReference type="ChEBI" id="CHEBI:32682"/>
        <dbReference type="ChEBI" id="CHEBI:57472"/>
        <dbReference type="EC" id="4.3.2.1"/>
    </reaction>
</comment>
<comment type="pathway">
    <text evidence="1">Amino-acid biosynthesis; L-arginine biosynthesis; L-arginine from L-ornithine and carbamoyl phosphate: step 3/3.</text>
</comment>
<comment type="subcellular location">
    <subcellularLocation>
        <location evidence="1">Cytoplasm</location>
    </subcellularLocation>
</comment>
<comment type="similarity">
    <text evidence="1">Belongs to the lyase 1 family. Argininosuccinate lyase subfamily.</text>
</comment>
<proteinExistence type="inferred from homology"/>
<evidence type="ECO:0000255" key="1">
    <source>
        <dbReference type="HAMAP-Rule" id="MF_00006"/>
    </source>
</evidence>
<feature type="chain" id="PRO_0000137788" description="Argininosuccinate lyase">
    <location>
        <begin position="1"/>
        <end position="460"/>
    </location>
</feature>
<dbReference type="EC" id="4.3.2.1" evidence="1"/>
<dbReference type="EMBL" id="AE016827">
    <property type="protein sequence ID" value="AAU36844.1"/>
    <property type="molecule type" value="Genomic_DNA"/>
</dbReference>
<dbReference type="RefSeq" id="WP_011199419.1">
    <property type="nucleotide sequence ID" value="NC_006300.1"/>
</dbReference>
<dbReference type="SMR" id="Q65W16"/>
<dbReference type="STRING" id="221988.MS0237"/>
<dbReference type="KEGG" id="msu:MS0237"/>
<dbReference type="eggNOG" id="COG0165">
    <property type="taxonomic scope" value="Bacteria"/>
</dbReference>
<dbReference type="HOGENOM" id="CLU_027272_2_3_6"/>
<dbReference type="OrthoDB" id="9769623at2"/>
<dbReference type="UniPathway" id="UPA00068">
    <property type="reaction ID" value="UER00114"/>
</dbReference>
<dbReference type="Proteomes" id="UP000000607">
    <property type="component" value="Chromosome"/>
</dbReference>
<dbReference type="GO" id="GO:0005829">
    <property type="term" value="C:cytosol"/>
    <property type="evidence" value="ECO:0007669"/>
    <property type="project" value="TreeGrafter"/>
</dbReference>
<dbReference type="GO" id="GO:0004056">
    <property type="term" value="F:argininosuccinate lyase activity"/>
    <property type="evidence" value="ECO:0007669"/>
    <property type="project" value="UniProtKB-UniRule"/>
</dbReference>
<dbReference type="GO" id="GO:0042450">
    <property type="term" value="P:arginine biosynthetic process via ornithine"/>
    <property type="evidence" value="ECO:0007669"/>
    <property type="project" value="InterPro"/>
</dbReference>
<dbReference type="GO" id="GO:0006526">
    <property type="term" value="P:L-arginine biosynthetic process"/>
    <property type="evidence" value="ECO:0007669"/>
    <property type="project" value="UniProtKB-UniRule"/>
</dbReference>
<dbReference type="CDD" id="cd01359">
    <property type="entry name" value="Argininosuccinate_lyase"/>
    <property type="match status" value="1"/>
</dbReference>
<dbReference type="FunFam" id="1.10.275.10:FF:000004">
    <property type="entry name" value="Argininosuccinate lyase"/>
    <property type="match status" value="1"/>
</dbReference>
<dbReference type="FunFam" id="1.10.40.30:FF:000001">
    <property type="entry name" value="Argininosuccinate lyase"/>
    <property type="match status" value="1"/>
</dbReference>
<dbReference type="FunFam" id="1.20.200.10:FF:000006">
    <property type="entry name" value="Argininosuccinate lyase"/>
    <property type="match status" value="1"/>
</dbReference>
<dbReference type="Gene3D" id="1.10.40.30">
    <property type="entry name" value="Fumarase/aspartase (C-terminal domain)"/>
    <property type="match status" value="1"/>
</dbReference>
<dbReference type="Gene3D" id="1.20.200.10">
    <property type="entry name" value="Fumarase/aspartase (Central domain)"/>
    <property type="match status" value="1"/>
</dbReference>
<dbReference type="Gene3D" id="1.10.275.10">
    <property type="entry name" value="Fumarase/aspartase (N-terminal domain)"/>
    <property type="match status" value="1"/>
</dbReference>
<dbReference type="HAMAP" id="MF_00006">
    <property type="entry name" value="Arg_succ_lyase"/>
    <property type="match status" value="1"/>
</dbReference>
<dbReference type="InterPro" id="IPR029419">
    <property type="entry name" value="Arg_succ_lyase_C"/>
</dbReference>
<dbReference type="InterPro" id="IPR009049">
    <property type="entry name" value="Argininosuccinate_lyase"/>
</dbReference>
<dbReference type="InterPro" id="IPR024083">
    <property type="entry name" value="Fumarase/histidase_N"/>
</dbReference>
<dbReference type="InterPro" id="IPR020557">
    <property type="entry name" value="Fumarate_lyase_CS"/>
</dbReference>
<dbReference type="InterPro" id="IPR000362">
    <property type="entry name" value="Fumarate_lyase_fam"/>
</dbReference>
<dbReference type="InterPro" id="IPR022761">
    <property type="entry name" value="Fumarate_lyase_N"/>
</dbReference>
<dbReference type="InterPro" id="IPR008948">
    <property type="entry name" value="L-Aspartase-like"/>
</dbReference>
<dbReference type="NCBIfam" id="TIGR00838">
    <property type="entry name" value="argH"/>
    <property type="match status" value="1"/>
</dbReference>
<dbReference type="NCBIfam" id="NF008964">
    <property type="entry name" value="PRK12308.1"/>
    <property type="match status" value="1"/>
</dbReference>
<dbReference type="PANTHER" id="PTHR43814">
    <property type="entry name" value="ARGININOSUCCINATE LYASE"/>
    <property type="match status" value="1"/>
</dbReference>
<dbReference type="PANTHER" id="PTHR43814:SF1">
    <property type="entry name" value="ARGININOSUCCINATE LYASE"/>
    <property type="match status" value="1"/>
</dbReference>
<dbReference type="Pfam" id="PF14698">
    <property type="entry name" value="ASL_C2"/>
    <property type="match status" value="1"/>
</dbReference>
<dbReference type="Pfam" id="PF00206">
    <property type="entry name" value="Lyase_1"/>
    <property type="match status" value="1"/>
</dbReference>
<dbReference type="PRINTS" id="PR00145">
    <property type="entry name" value="ARGSUCLYASE"/>
</dbReference>
<dbReference type="PRINTS" id="PR00149">
    <property type="entry name" value="FUMRATELYASE"/>
</dbReference>
<dbReference type="SUPFAM" id="SSF48557">
    <property type="entry name" value="L-aspartase-like"/>
    <property type="match status" value="1"/>
</dbReference>
<dbReference type="PROSITE" id="PS00163">
    <property type="entry name" value="FUMARATE_LYASES"/>
    <property type="match status" value="1"/>
</dbReference>
<organism>
    <name type="scientific">Mannheimia succiniciproducens (strain KCTC 0769BP / MBEL55E)</name>
    <dbReference type="NCBI Taxonomy" id="221988"/>
    <lineage>
        <taxon>Bacteria</taxon>
        <taxon>Pseudomonadati</taxon>
        <taxon>Pseudomonadota</taxon>
        <taxon>Gammaproteobacteria</taxon>
        <taxon>Pasteurellales</taxon>
        <taxon>Pasteurellaceae</taxon>
        <taxon>Basfia</taxon>
    </lineage>
</organism>
<protein>
    <recommendedName>
        <fullName evidence="1">Argininosuccinate lyase</fullName>
        <shortName evidence="1">ASAL</shortName>
        <ecNumber evidence="1">4.3.2.1</ecNumber>
    </recommendedName>
    <alternativeName>
        <fullName evidence="1">Arginosuccinase</fullName>
    </alternativeName>
</protein>
<name>ARLY_MANSM</name>
<keyword id="KW-0028">Amino-acid biosynthesis</keyword>
<keyword id="KW-0055">Arginine biosynthesis</keyword>
<keyword id="KW-0963">Cytoplasm</keyword>
<keyword id="KW-0456">Lyase</keyword>
<gene>
    <name evidence="1" type="primary">argH</name>
    <name type="ordered locus">MS0237</name>
</gene>
<reference key="1">
    <citation type="journal article" date="2004" name="Nat. Biotechnol.">
        <title>The genome sequence of the capnophilic rumen bacterium Mannheimia succiniciproducens.</title>
        <authorList>
            <person name="Hong S.H."/>
            <person name="Kim J.S."/>
            <person name="Lee S.Y."/>
            <person name="In Y.H."/>
            <person name="Choi S.S."/>
            <person name="Rih J.-K."/>
            <person name="Kim C.H."/>
            <person name="Jeong H."/>
            <person name="Hur C.G."/>
            <person name="Kim J.J."/>
        </authorList>
    </citation>
    <scope>NUCLEOTIDE SEQUENCE [LARGE SCALE GENOMIC DNA]</scope>
    <source>
        <strain>KCTC 0769BP / MBEL55E</strain>
    </source>
</reference>
<sequence length="460" mass="51183">MALWGGRFTQAADQRFKDFNDSLRFDYRLAEQDIEGSVGWSKALVSVGVLTTDEQQQLERALNELLIEVRSNPQAILQDDAEDIHSWVESKLIDKVGNLGKKLHTGRSRNDQVALDIKMWCKAQVTELQYAVRDLQAKLVETAENNQHAVMPGYTHLQRAQPISFAHWCMAYVEMLERDYSRLADAYNRMDSCPLGSGALAGTAYPVDREQLAKDLGFAFATRNSLDSVSDRDHIIELLSTASLSMVHLSRFAEDMIIFNSGEADFVELSDRVTSGSSLMPQKKNPDACELIRGKAGRVIGSLTGMMVTVKGLPLAYNKDMQEDKEGIFDALDTWHDCLTMAAFVLEDIRVNVERTREAALKGYSNATELADYLVAKGVPFRDSHHIVGETVVYAIKVHKGLEDLSIEEFRQFSDVVGEDVYPILSLQSCLDKRSAKGGVSPLRVAEAIADAKARIAAKK</sequence>